<organism>
    <name type="scientific">Scolopendra dehaani</name>
    <name type="common">Thai centipede</name>
    <name type="synonym">Scolopendra subspinipes dehaani</name>
    <dbReference type="NCBI Taxonomy" id="2609776"/>
    <lineage>
        <taxon>Eukaryota</taxon>
        <taxon>Metazoa</taxon>
        <taxon>Ecdysozoa</taxon>
        <taxon>Arthropoda</taxon>
        <taxon>Myriapoda</taxon>
        <taxon>Chilopoda</taxon>
        <taxon>Pleurostigmophora</taxon>
        <taxon>Scolopendromorpha</taxon>
        <taxon>Scolopendridae</taxon>
        <taxon>Scolopendra</taxon>
    </lineage>
</organism>
<comment type="subcellular location">
    <subcellularLocation>
        <location evidence="4">Secreted</location>
    </subcellularLocation>
</comment>
<comment type="tissue specificity">
    <text evidence="7">Expressed by the venom gland.</text>
</comment>
<comment type="mass spectrometry"/>
<comment type="similarity">
    <text evidence="6">Belongs to the scoloptoxin-04 family.</text>
</comment>
<keyword id="KW-0165">Cleavage on pair of basic residues</keyword>
<keyword id="KW-0903">Direct protein sequencing</keyword>
<keyword id="KW-1015">Disulfide bond</keyword>
<keyword id="KW-0964">Secreted</keyword>
<keyword id="KW-0732">Signal</keyword>
<keyword id="KW-0800">Toxin</keyword>
<accession>P0DPV4</accession>
<evidence type="ECO:0000250" key="1">
    <source>
        <dbReference type="UniProtKB" id="A0A0N7CSQ4"/>
    </source>
</evidence>
<evidence type="ECO:0000250" key="2">
    <source>
        <dbReference type="UniProtKB" id="P0DRC9"/>
    </source>
</evidence>
<evidence type="ECO:0000255" key="3"/>
<evidence type="ECO:0000269" key="4">
    <source>
    </source>
</evidence>
<evidence type="ECO:0000303" key="5">
    <source>
    </source>
</evidence>
<evidence type="ECO:0000305" key="6"/>
<evidence type="ECO:0000305" key="7">
    <source>
    </source>
</evidence>
<name>TX41B_SCODE</name>
<protein>
    <recommendedName>
        <fullName evidence="6">Kappa-scoloptoxin(04)-Ssd1b</fullName>
        <shortName evidence="6">Kappa-SLPTX(04)-Ssd1b</shortName>
    </recommendedName>
    <alternativeName>
        <fullName evidence="5">Toxin SSD410</fullName>
    </alternativeName>
</protein>
<feature type="signal peptide" evidence="3">
    <location>
        <begin position="1"/>
        <end position="24"/>
    </location>
</feature>
<feature type="propeptide" id="PRO_0000446712" evidence="7">
    <location>
        <begin position="25"/>
        <end position="36"/>
    </location>
</feature>
<feature type="chain" id="PRO_0000446713" description="Kappa-scoloptoxin(04)-Ssd1b" evidence="4">
    <location>
        <begin position="37"/>
        <end position="67"/>
    </location>
</feature>
<feature type="disulfide bond" evidence="1 2">
    <location>
        <begin position="44"/>
        <end position="55"/>
    </location>
</feature>
<feature type="disulfide bond" evidence="1 2">
    <location>
        <begin position="49"/>
        <end position="62"/>
    </location>
</feature>
<proteinExistence type="evidence at protein level"/>
<sequence>MKKTCVVSVFLVLLLLKFHDLSMGEEISPLKKVARREDNLVLSCAEFPCPEGYICDTASQKCRPGTD</sequence>
<reference key="1">
    <citation type="journal article" date="2012" name="J. Proteome Res.">
        <title>Venomic and transcriptomic analysis of centipede Scolopendra subspinipes dehaani.</title>
        <authorList>
            <person name="Liu Z.C."/>
            <person name="Zhang R."/>
            <person name="Zhao F."/>
            <person name="Chen Z.M."/>
            <person name="Liu H.W."/>
            <person name="Wang Y.J."/>
            <person name="Jiang P."/>
            <person name="Zhang Y."/>
            <person name="Wu Y."/>
            <person name="Ding J.P."/>
            <person name="Lee W.H."/>
            <person name="Zhang Y."/>
        </authorList>
    </citation>
    <scope>NUCLEOTIDE SEQUENCE [MRNA]</scope>
    <scope>PROTEIN SEQUENCE OF 37-67</scope>
    <scope>SUBCELLULAR LOCATION</scope>
    <scope>MASS SPECTROMETRY</scope>
    <source>
        <tissue>Venom</tissue>
        <tissue>Venom gland</tissue>
    </source>
</reference>
<dbReference type="EMBL" id="KC144409">
    <property type="status" value="NOT_ANNOTATED_CDS"/>
    <property type="molecule type" value="mRNA"/>
</dbReference>
<dbReference type="SMR" id="P0DPV4"/>
<dbReference type="TCDB" id="8.B.41.1.2">
    <property type="family name" value="the centipede toxin (rhtx) family"/>
</dbReference>
<dbReference type="GO" id="GO:0005576">
    <property type="term" value="C:extracellular region"/>
    <property type="evidence" value="ECO:0007669"/>
    <property type="project" value="UniProtKB-SubCell"/>
</dbReference>
<dbReference type="GO" id="GO:0090729">
    <property type="term" value="F:toxin activity"/>
    <property type="evidence" value="ECO:0007669"/>
    <property type="project" value="UniProtKB-KW"/>
</dbReference>